<comment type="function">
    <text evidence="1 6 7">Sodium- and chloride-dependent glycine transporter (PubMed:1534013, PubMed:16181645). Essential for regulating glycine concentrations at inhibitory glycinergic synapses (By similarity).</text>
</comment>
<comment type="catalytic activity">
    <reaction evidence="6 7">
        <text>glycine(out) + chloride(out) + 2 Na(+)(out) = glycine(in) + chloride(in) + 2 Na(+)(in)</text>
        <dbReference type="Rhea" id="RHEA:70691"/>
        <dbReference type="ChEBI" id="CHEBI:17996"/>
        <dbReference type="ChEBI" id="CHEBI:29101"/>
        <dbReference type="ChEBI" id="CHEBI:57305"/>
    </reaction>
</comment>
<comment type="activity regulation">
    <text evidence="6">Inhibited by sarcosine.</text>
</comment>
<comment type="biophysicochemical properties">
    <kinetics>
        <KM evidence="6">123 uM for glycine</KM>
        <KM evidence="7">185 uM for glycine</KM>
        <Vmax evidence="6 7">28.0 nmol/min/mg enzyme with glycine as substrate</Vmax>
    </kinetics>
</comment>
<comment type="subunit">
    <text evidence="7">Interacts with EXOC1; interaction increases the transporter capacity of SLC6A9 probably by promoting its insertion into the cell membrane (PubMed:16181645). Interacts with EXOC3 and EXOC4 (PubMed:16181645).</text>
</comment>
<comment type="interaction">
    <interactant intactId="EBI-848783">
        <id>P28572</id>
    </interactant>
    <interactant intactId="EBI-375655">
        <id>P31016</id>
        <label>Dlg4</label>
    </interactant>
    <organismsDiffer>false</organismsDiffer>
    <experiments>2</experiments>
</comment>
<comment type="interaction">
    <interactant intactId="EBI-848796">
        <id>P28572-2</id>
    </interactant>
    <interactant intactId="EBI-375655">
        <id>P31016</id>
        <label>Dlg4</label>
    </interactant>
    <organismsDiffer>false</organismsDiffer>
    <experiments>4</experiments>
</comment>
<comment type="subcellular location">
    <subcellularLocation>
        <location evidence="7">Cell membrane</location>
        <topology evidence="3">Multi-pass membrane protein</topology>
    </subcellularLocation>
</comment>
<comment type="alternative products">
    <event type="alternative promoter"/>
    <isoform>
        <id>P28572-2</id>
        <name>1</name>
        <name>GlyT-1B</name>
        <name>GlyT-1</name>
        <sequence type="displayed"/>
    </isoform>
    <isoform>
        <id>P28572-1</id>
        <name>2</name>
        <name>GlyT-1A</name>
        <name>GlyT-2</name>
        <sequence type="described" ref="VSP_039239"/>
    </isoform>
</comment>
<comment type="tissue specificity">
    <molecule>Isoform 1</molecule>
    <text evidence="6">Found only in the white matter of the CNS.</text>
</comment>
<comment type="tissue specificity">
    <molecule>Isoform 2</molecule>
    <text evidence="5 8">Found in the gray matter of CNS as well as in macrophages and mast cells in peripheral tissues.</text>
</comment>
<comment type="similarity">
    <text evidence="12">Belongs to the sodium:neurotransmitter symporter (SNF) (TC 2.A.22) family. SLC6A9 subfamily.</text>
</comment>
<dbReference type="EMBL" id="M95413">
    <property type="protein sequence ID" value="AAA41256.1"/>
    <property type="molecule type" value="mRNA"/>
</dbReference>
<dbReference type="EMBL" id="M88595">
    <property type="protein sequence ID" value="AAA41257.1"/>
    <property type="molecule type" value="mRNA"/>
</dbReference>
<dbReference type="EMBL" id="L13600">
    <property type="protein sequence ID" value="AAA73557.1"/>
    <property type="molecule type" value="mRNA"/>
</dbReference>
<dbReference type="EMBL" id="BC128732">
    <property type="protein sequence ID" value="AAI28733.1"/>
    <property type="molecule type" value="mRNA"/>
</dbReference>
<dbReference type="EMBL" id="U28975">
    <property type="protein sequence ID" value="AAC71066.1"/>
    <property type="molecule type" value="Genomic_DNA"/>
</dbReference>
<dbReference type="EMBL" id="U28975">
    <property type="protein sequence ID" value="AAC71067.1"/>
    <property type="molecule type" value="Genomic_DNA"/>
</dbReference>
<dbReference type="PIR" id="I58140">
    <property type="entry name" value="I58140"/>
</dbReference>
<dbReference type="PIR" id="JH0673">
    <property type="entry name" value="JH0673"/>
</dbReference>
<dbReference type="RefSeq" id="NP_446270.1">
    <molecule id="P28572-1"/>
    <property type="nucleotide sequence ID" value="NM_053818.3"/>
</dbReference>
<dbReference type="RefSeq" id="XP_006238687.1">
    <molecule id="P28572-2"/>
    <property type="nucleotide sequence ID" value="XM_006238625.5"/>
</dbReference>
<dbReference type="SMR" id="P28572"/>
<dbReference type="BioGRID" id="250476">
    <property type="interactions" value="1"/>
</dbReference>
<dbReference type="FunCoup" id="P28572">
    <property type="interactions" value="226"/>
</dbReference>
<dbReference type="IntAct" id="P28572">
    <property type="interactions" value="2"/>
</dbReference>
<dbReference type="STRING" id="10116.ENSRNOP00000070161"/>
<dbReference type="BindingDB" id="P28572"/>
<dbReference type="ChEMBL" id="CHEMBL4556"/>
<dbReference type="GuidetoPHARMACOLOGY" id="935"/>
<dbReference type="TCDB" id="2.A.22.2.2">
    <property type="family name" value="the neurotransmitter:sodium symporter (nss) family"/>
</dbReference>
<dbReference type="GlyCosmos" id="P28572">
    <property type="glycosylation" value="4 sites, No reported glycans"/>
</dbReference>
<dbReference type="GlyGen" id="P28572">
    <property type="glycosylation" value="4 sites"/>
</dbReference>
<dbReference type="iPTMnet" id="P28572"/>
<dbReference type="PhosphoSitePlus" id="P28572"/>
<dbReference type="PaxDb" id="10116-ENSRNOP00000040252"/>
<dbReference type="Ensembl" id="ENSRNOT00000085527.2">
    <molecule id="P28572-2"/>
    <property type="protein sequence ID" value="ENSRNOP00000070161.1"/>
    <property type="gene ID" value="ENSRNOG00000019484.7"/>
</dbReference>
<dbReference type="GeneID" id="116509"/>
<dbReference type="KEGG" id="rno:116509"/>
<dbReference type="AGR" id="RGD:621243"/>
<dbReference type="CTD" id="6536"/>
<dbReference type="RGD" id="621243">
    <property type="gene designation" value="Slc6a9"/>
</dbReference>
<dbReference type="eggNOG" id="KOG3660">
    <property type="taxonomic scope" value="Eukaryota"/>
</dbReference>
<dbReference type="GeneTree" id="ENSGT00940000157263"/>
<dbReference type="HOGENOM" id="CLU_006855_9_5_1"/>
<dbReference type="InParanoid" id="P28572"/>
<dbReference type="OMA" id="QHNGVQI"/>
<dbReference type="OrthoDB" id="13580at9989"/>
<dbReference type="PhylomeDB" id="P28572"/>
<dbReference type="TreeFam" id="TF343812"/>
<dbReference type="Reactome" id="R-RNO-442660">
    <property type="pathway name" value="Na+/Cl- dependent neurotransmitter transporters"/>
</dbReference>
<dbReference type="SABIO-RK" id="P28572"/>
<dbReference type="PRO" id="PR:P28572"/>
<dbReference type="Proteomes" id="UP000002494">
    <property type="component" value="Chromosome 5"/>
</dbReference>
<dbReference type="Bgee" id="ENSRNOG00000019484">
    <property type="expression patterns" value="Expressed in cerebellum and 19 other cell types or tissues"/>
</dbReference>
<dbReference type="GO" id="GO:0016324">
    <property type="term" value="C:apical plasma membrane"/>
    <property type="evidence" value="ECO:0000266"/>
    <property type="project" value="RGD"/>
</dbReference>
<dbReference type="GO" id="GO:0032279">
    <property type="term" value="C:asymmetric synapse"/>
    <property type="evidence" value="ECO:0000314"/>
    <property type="project" value="SynGO"/>
</dbReference>
<dbReference type="GO" id="GO:0009925">
    <property type="term" value="C:basal plasma membrane"/>
    <property type="evidence" value="ECO:0000266"/>
    <property type="project" value="RGD"/>
</dbReference>
<dbReference type="GO" id="GO:0016323">
    <property type="term" value="C:basolateral plasma membrane"/>
    <property type="evidence" value="ECO:0000266"/>
    <property type="project" value="RGD"/>
</dbReference>
<dbReference type="GO" id="GO:0031045">
    <property type="term" value="C:dense core granule"/>
    <property type="evidence" value="ECO:0000314"/>
    <property type="project" value="ARUK-UCL"/>
</dbReference>
<dbReference type="GO" id="GO:0005768">
    <property type="term" value="C:endosome"/>
    <property type="evidence" value="ECO:0000314"/>
    <property type="project" value="ARUK-UCL"/>
</dbReference>
<dbReference type="GO" id="GO:0098686">
    <property type="term" value="C:hippocampal mossy fiber to CA3 synapse"/>
    <property type="evidence" value="ECO:0000314"/>
    <property type="project" value="SynGO"/>
</dbReference>
<dbReference type="GO" id="GO:0016328">
    <property type="term" value="C:lateral plasma membrane"/>
    <property type="evidence" value="ECO:0000266"/>
    <property type="project" value="RGD"/>
</dbReference>
<dbReference type="GO" id="GO:0098688">
    <property type="term" value="C:parallel fiber to Purkinje cell synapse"/>
    <property type="evidence" value="ECO:0000314"/>
    <property type="project" value="SynGO"/>
</dbReference>
<dbReference type="GO" id="GO:0005886">
    <property type="term" value="C:plasma membrane"/>
    <property type="evidence" value="ECO:0000314"/>
    <property type="project" value="UniProtKB"/>
</dbReference>
<dbReference type="GO" id="GO:0014069">
    <property type="term" value="C:postsynaptic density"/>
    <property type="evidence" value="ECO:0000314"/>
    <property type="project" value="SynGO"/>
</dbReference>
<dbReference type="GO" id="GO:0045211">
    <property type="term" value="C:postsynaptic membrane"/>
    <property type="evidence" value="ECO:0000314"/>
    <property type="project" value="SynGO"/>
</dbReference>
<dbReference type="GO" id="GO:0042734">
    <property type="term" value="C:presynaptic membrane"/>
    <property type="evidence" value="ECO:0000314"/>
    <property type="project" value="SynGO"/>
</dbReference>
<dbReference type="GO" id="GO:0030672">
    <property type="term" value="C:synaptic vesicle membrane"/>
    <property type="evidence" value="ECO:0000314"/>
    <property type="project" value="SynGO"/>
</dbReference>
<dbReference type="GO" id="GO:0005283">
    <property type="term" value="F:amino acid:sodium symporter activity"/>
    <property type="evidence" value="ECO:0000318"/>
    <property type="project" value="GO_Central"/>
</dbReference>
<dbReference type="GO" id="GO:0015187">
    <property type="term" value="F:glycine transmembrane transporter activity"/>
    <property type="evidence" value="ECO:0000314"/>
    <property type="project" value="ARUK-UCL"/>
</dbReference>
<dbReference type="GO" id="GO:0015375">
    <property type="term" value="F:glycine:sodium symporter activity"/>
    <property type="evidence" value="ECO:0000314"/>
    <property type="project" value="UniProtKB"/>
</dbReference>
<dbReference type="GO" id="GO:1903804">
    <property type="term" value="P:glycine import across plasma membrane"/>
    <property type="evidence" value="ECO:0000314"/>
    <property type="project" value="ARUK-UCL"/>
</dbReference>
<dbReference type="GO" id="GO:0061537">
    <property type="term" value="P:glycine secretion, neurotransmission"/>
    <property type="evidence" value="ECO:0000266"/>
    <property type="project" value="RGD"/>
</dbReference>
<dbReference type="GO" id="GO:0015816">
    <property type="term" value="P:glycine transport"/>
    <property type="evidence" value="ECO:0000266"/>
    <property type="project" value="RGD"/>
</dbReference>
<dbReference type="GO" id="GO:0001504">
    <property type="term" value="P:neurotransmitter uptake"/>
    <property type="evidence" value="ECO:0000266"/>
    <property type="project" value="RGD"/>
</dbReference>
<dbReference type="GO" id="GO:0070455">
    <property type="term" value="P:positive regulation of heme biosynthetic process"/>
    <property type="evidence" value="ECO:0000266"/>
    <property type="project" value="RGD"/>
</dbReference>
<dbReference type="GO" id="GO:0046985">
    <property type="term" value="P:positive regulation of hemoglobin biosynthetic process"/>
    <property type="evidence" value="ECO:0000266"/>
    <property type="project" value="RGD"/>
</dbReference>
<dbReference type="GO" id="GO:0060092">
    <property type="term" value="P:regulation of synaptic transmission, glycinergic"/>
    <property type="evidence" value="ECO:0000250"/>
    <property type="project" value="UniProtKB"/>
</dbReference>
<dbReference type="GO" id="GO:0035725">
    <property type="term" value="P:sodium ion transmembrane transport"/>
    <property type="evidence" value="ECO:0000318"/>
    <property type="project" value="GO_Central"/>
</dbReference>
<dbReference type="CDD" id="cd11498">
    <property type="entry name" value="SLC6sbd_GlyT1"/>
    <property type="match status" value="1"/>
</dbReference>
<dbReference type="InterPro" id="IPR000175">
    <property type="entry name" value="Na/ntran_symport"/>
</dbReference>
<dbReference type="InterPro" id="IPR003028">
    <property type="entry name" value="Na/ntran_symport_glycine_GLY1"/>
</dbReference>
<dbReference type="InterPro" id="IPR037272">
    <property type="entry name" value="SNS_sf"/>
</dbReference>
<dbReference type="PANTHER" id="PTHR11616:SF263">
    <property type="entry name" value="SODIUM- AND CHLORIDE-DEPENDENT GLYCINE TRANSPORTER 1"/>
    <property type="match status" value="1"/>
</dbReference>
<dbReference type="PANTHER" id="PTHR11616">
    <property type="entry name" value="SODIUM/CHLORIDE DEPENDENT TRANSPORTER"/>
    <property type="match status" value="1"/>
</dbReference>
<dbReference type="Pfam" id="PF00209">
    <property type="entry name" value="SNF"/>
    <property type="match status" value="1"/>
</dbReference>
<dbReference type="PRINTS" id="PR01204">
    <property type="entry name" value="GLY1TRNSPORT"/>
</dbReference>
<dbReference type="PRINTS" id="PR00176">
    <property type="entry name" value="NANEUSMPORT"/>
</dbReference>
<dbReference type="SUPFAM" id="SSF161070">
    <property type="entry name" value="SNF-like"/>
    <property type="match status" value="1"/>
</dbReference>
<dbReference type="PROSITE" id="PS00610">
    <property type="entry name" value="NA_NEUROTRAN_SYMP_1"/>
    <property type="match status" value="1"/>
</dbReference>
<dbReference type="PROSITE" id="PS00754">
    <property type="entry name" value="NA_NEUROTRAN_SYMP_2"/>
    <property type="match status" value="1"/>
</dbReference>
<dbReference type="PROSITE" id="PS50267">
    <property type="entry name" value="NA_NEUROTRAN_SYMP_3"/>
    <property type="match status" value="1"/>
</dbReference>
<name>SC6A9_RAT</name>
<protein>
    <recommendedName>
        <fullName>Sodium- and chloride-dependent glycine transporter 1</fullName>
        <shortName>GlyT-1</shortName>
        <shortName>GlyT1</shortName>
    </recommendedName>
    <alternativeName>
        <fullName>Solute carrier family 6 member 9</fullName>
    </alternativeName>
</protein>
<reference key="1">
    <citation type="journal article" date="1992" name="Proc. Natl. Acad. Sci. U.S.A.">
        <title>Cloning, expression, and localization of a rat brain high-affinity glycine transporter.</title>
        <authorList>
            <person name="Guastella J."/>
            <person name="Brecha N."/>
            <person name="Weigmann C."/>
            <person name="Lester H.A."/>
            <person name="Davidson N."/>
        </authorList>
    </citation>
    <scope>NUCLEOTIDE SEQUENCE [MRNA] (ISOFORM 2)</scope>
    <scope>TISSUE SPECIFICITY</scope>
    <source>
        <strain>Sprague-Dawley</strain>
        <tissue>Brain</tissue>
    </source>
</reference>
<reference key="2">
    <citation type="journal article" date="1992" name="Neuron">
        <title>Cloning and expression of a glycine transporter reveal colocalization with NMDA receptors.</title>
        <authorList>
            <person name="Smith K.E."/>
            <person name="Borden L.A."/>
            <person name="Hartig P.R."/>
            <person name="Branchek T.A."/>
            <person name="Weinshank R.L."/>
        </authorList>
    </citation>
    <scope>NUCLEOTIDE SEQUENCE [MRNA] (ISOFORM 1)</scope>
    <scope>FUNCTION</scope>
    <scope>BIOPHYSICOCHEMICAL PROPERTIES</scope>
    <scope>TISSUE SPECIFICITY</scope>
    <scope>TRANSPORTER ACTIVITY</scope>
    <scope>ACTIVITY REGULATION</scope>
    <source>
        <tissue>Brain</tissue>
    </source>
</reference>
<reference key="3">
    <citation type="journal article" date="1993" name="Neuron">
        <title>Two glycine transporter variants with distinct localization in the CNS and peripheral tissues are encoded by a common gene.</title>
        <authorList>
            <person name="Borowsky B."/>
            <person name="Mezey E."/>
            <person name="Hoffman B.J."/>
        </authorList>
    </citation>
    <scope>NUCLEOTIDE SEQUENCE [MRNA] (ISOFORM 2)</scope>
    <scope>TISSUE SPECIFICITY</scope>
    <source>
        <tissue>Blood</tissue>
    </source>
</reference>
<reference key="4">
    <citation type="journal article" date="2004" name="Genome Res.">
        <title>The status, quality, and expansion of the NIH full-length cDNA project: the Mammalian Gene Collection (MGC).</title>
        <authorList>
            <consortium name="The MGC Project Team"/>
        </authorList>
    </citation>
    <scope>NUCLEOTIDE SEQUENCE [LARGE SCALE MRNA] (ISOFORM 2)</scope>
    <source>
        <tissue>Brain</tissue>
    </source>
</reference>
<reference key="5">
    <citation type="journal article" date="1998" name="J. Biol. Chem.">
        <title>Analysis of a gene encoding two glycine transporter variants reveals alternative promoter usage and a novel gene structure.</title>
        <authorList>
            <person name="Borowsky B."/>
            <person name="Hoffman B.J."/>
        </authorList>
    </citation>
    <scope>NUCLEOTIDE SEQUENCE [GENOMIC DNA] OF 1-67 (ISOFORMS 1 AND 2)</scope>
    <scope>ALTERNATIVE PROMOTER USAGE</scope>
    <source>
        <strain>Sprague-Dawley</strain>
        <tissue>Brain</tissue>
    </source>
</reference>
<reference key="6">
    <citation type="journal article" date="2005" name="Neuropharmacology">
        <title>The glycine transporter GLYT1 interacts with Sec3, a component of the exocyst complex.</title>
        <authorList>
            <person name="Cubelos B."/>
            <person name="Gimenez C."/>
            <person name="Zafra F."/>
        </authorList>
    </citation>
    <scope>FUNCTION</scope>
    <scope>TRANSPORTER ACTIVITY</scope>
    <scope>BIOPHYSICOCHEMICAL PROPERTIES</scope>
    <scope>SUBCELLULAR LOCATION</scope>
    <scope>INTERACTION WITH EXOC1; EXCO3 AND EXOC4</scope>
</reference>
<reference key="7">
    <citation type="journal article" date="2012" name="Nat. Commun.">
        <title>Quantitative maps of protein phosphorylation sites across 14 different rat organs and tissues.</title>
        <authorList>
            <person name="Lundby A."/>
            <person name="Secher A."/>
            <person name="Lage K."/>
            <person name="Nordsborg N.B."/>
            <person name="Dmytriyev A."/>
            <person name="Lundby C."/>
            <person name="Olsen J.V."/>
        </authorList>
    </citation>
    <scope>PHOSPHORYLATION [LARGE SCALE ANALYSIS] AT THR-603 AND SER-605</scope>
    <scope>IDENTIFICATION BY MASS SPECTROMETRY [LARGE SCALE ANALYSIS]</scope>
</reference>
<accession>P28572</accession>
<accession>A1A5N0</accession>
<accession>Q63322</accession>
<accession>Q63323</accession>
<organism>
    <name type="scientific">Rattus norvegicus</name>
    <name type="common">Rat</name>
    <dbReference type="NCBI Taxonomy" id="10116"/>
    <lineage>
        <taxon>Eukaryota</taxon>
        <taxon>Metazoa</taxon>
        <taxon>Chordata</taxon>
        <taxon>Craniata</taxon>
        <taxon>Vertebrata</taxon>
        <taxon>Euteleostomi</taxon>
        <taxon>Mammalia</taxon>
        <taxon>Eutheria</taxon>
        <taxon>Euarchontoglires</taxon>
        <taxon>Glires</taxon>
        <taxon>Rodentia</taxon>
        <taxon>Myomorpha</taxon>
        <taxon>Muroidea</taxon>
        <taxon>Muridae</taxon>
        <taxon>Murinae</taxon>
        <taxon>Rattus</taxon>
    </lineage>
</organism>
<evidence type="ECO:0000250" key="1">
    <source>
        <dbReference type="UniProtKB" id="P28571"/>
    </source>
</evidence>
<evidence type="ECO:0000250" key="2">
    <source>
        <dbReference type="UniProtKB" id="P48067"/>
    </source>
</evidence>
<evidence type="ECO:0000255" key="3"/>
<evidence type="ECO:0000256" key="4">
    <source>
        <dbReference type="SAM" id="MobiDB-lite"/>
    </source>
</evidence>
<evidence type="ECO:0000269" key="5">
    <source>
    </source>
</evidence>
<evidence type="ECO:0000269" key="6">
    <source>
    </source>
</evidence>
<evidence type="ECO:0000269" key="7">
    <source>
    </source>
</evidence>
<evidence type="ECO:0000269" key="8">
    <source>
    </source>
</evidence>
<evidence type="ECO:0000303" key="9">
    <source>
    </source>
</evidence>
<evidence type="ECO:0000303" key="10">
    <source>
    </source>
</evidence>
<evidence type="ECO:0000303" key="11">
    <source>
    </source>
</evidence>
<evidence type="ECO:0000305" key="12"/>
<evidence type="ECO:0007744" key="13">
    <source>
    </source>
</evidence>
<gene>
    <name type="primary">Slc6a9</name>
</gene>
<feature type="chain" id="PRO_0000214782" description="Sodium- and chloride-dependent glycine transporter 1">
    <location>
        <begin position="1"/>
        <end position="638"/>
    </location>
</feature>
<feature type="topological domain" description="Cytoplasmic" evidence="3">
    <location>
        <begin position="1"/>
        <end position="40"/>
    </location>
</feature>
<feature type="transmembrane region" description="Helical; Name=1" evidence="3">
    <location>
        <begin position="41"/>
        <end position="61"/>
    </location>
</feature>
<feature type="transmembrane region" description="Helical; Name=2" evidence="3">
    <location>
        <begin position="68"/>
        <end position="88"/>
    </location>
</feature>
<feature type="transmembrane region" description="Helical; Name=3" evidence="3">
    <location>
        <begin position="120"/>
        <end position="140"/>
    </location>
</feature>
<feature type="topological domain" description="Extracellular" evidence="3">
    <location>
        <begin position="141"/>
        <end position="217"/>
    </location>
</feature>
<feature type="transmembrane region" description="Helical; Name=4" evidence="3">
    <location>
        <begin position="218"/>
        <end position="238"/>
    </location>
</feature>
<feature type="transmembrane region" description="Helical; Name=5" evidence="3">
    <location>
        <begin position="247"/>
        <end position="267"/>
    </location>
</feature>
<feature type="transmembrane region" description="Helical; Name=6" evidence="3">
    <location>
        <begin position="292"/>
        <end position="312"/>
    </location>
</feature>
<feature type="transmembrane region" description="Helical; Name=7" evidence="3">
    <location>
        <begin position="339"/>
        <end position="359"/>
    </location>
</feature>
<feature type="transmembrane region" description="Helical; Name=8" evidence="3">
    <location>
        <begin position="382"/>
        <end position="402"/>
    </location>
</feature>
<feature type="transmembrane region" description="Helical; Name=9" evidence="3">
    <location>
        <begin position="438"/>
        <end position="458"/>
    </location>
</feature>
<feature type="transmembrane region" description="Helical; Name=10" evidence="3">
    <location>
        <begin position="462"/>
        <end position="482"/>
    </location>
</feature>
<feature type="transmembrane region" description="Helical; Name=11" evidence="3">
    <location>
        <begin position="502"/>
        <end position="522"/>
    </location>
</feature>
<feature type="transmembrane region" description="Helical; Name=12" evidence="3">
    <location>
        <begin position="542"/>
        <end position="562"/>
    </location>
</feature>
<feature type="topological domain" description="Cytoplasmic" evidence="3">
    <location>
        <begin position="563"/>
        <end position="638"/>
    </location>
</feature>
<feature type="region of interest" description="Disordered" evidence="4">
    <location>
        <begin position="1"/>
        <end position="30"/>
    </location>
</feature>
<feature type="region of interest" description="Essential for interaction with EXOC1" evidence="7">
    <location>
        <begin position="627"/>
        <end position="638"/>
    </location>
</feature>
<feature type="modified residue" description="Phosphothreonine" evidence="13">
    <location>
        <position position="603"/>
    </location>
</feature>
<feature type="modified residue" description="Phosphoserine" evidence="13">
    <location>
        <position position="605"/>
    </location>
</feature>
<feature type="modified residue" description="Phosphoserine" evidence="2">
    <location>
        <position position="630"/>
    </location>
</feature>
<feature type="glycosylation site" description="N-linked (GlcNAc...) asparagine" evidence="3">
    <location>
        <position position="169"/>
    </location>
</feature>
<feature type="glycosylation site" description="N-linked (GlcNAc...) asparagine" evidence="3">
    <location>
        <position position="172"/>
    </location>
</feature>
<feature type="glycosylation site" description="N-linked (GlcNAc...) asparagine" evidence="3">
    <location>
        <position position="182"/>
    </location>
</feature>
<feature type="glycosylation site" description="N-linked (GlcNAc...) asparagine" evidence="3">
    <location>
        <position position="188"/>
    </location>
</feature>
<feature type="splice variant" id="VSP_039239" description="In isoform 2." evidence="9 10 11">
    <original>MAVAHGPVATSSPEQ</original>
    <variation>MVGKGAKGML</variation>
    <location>
        <begin position="1"/>
        <end position="15"/>
    </location>
</feature>
<feature type="sequence conflict" description="In Ref. 5; AAC71066/AAC71067." evidence="12" ref="5">
    <original>V</original>
    <variation>W</variation>
    <location>
        <position position="50"/>
    </location>
</feature>
<sequence length="638" mass="71061">MAVAHGPVATSSPEQNGAVPSEATKKDQNLTRGNWGNQIEFVLTSVGYAVGLGNVWRFPYLCYRNGGGAFMFPYFIMLVFCGIPLFFMELSFGQFASQGCLGVWRISPMFKGVGYGMMVVSTYIGIYYNVVICIAFYYFFSSMTHVLPWAYCNNPWNTPDCAGVLDASNLTNGSRPTALSGNLSHLFNYTLQRTSPSEEYWRLYVLKLSDDIGDFGEVRLPLLGCLGVSWVVVFLCLIRGVKSSGKVVYFTATFPYVVLTILFVRGVTLEGAFTGIMYYLTPKWDKILEAKVWGDAASQIFYSLGCAWGGLITMASYNKFHNNCYRDSVIISITNCATSVYAGFVIFSILGFMANHLGVDVSRVADHGPGLAFVAYPEALTLLPISPLWSLLFFFMLILLGLGTQFCLLETLVTAIVDEVGNEWILQKKTYVTLGVAVAGFLLGIPLTSQAGIYWLLLMDNYAASFSLVVISCIMCVSIMYIYGHRNYFQDIQMMLGFPPPLFFQICWRFVSPTIIFFILIFTVIQYRPITYNHYQYPGWAVAIGFLMALSSVICIPLYALFQLCRTDGDTLLQRLKNATKPSRDWGPALLEHRTGRYAPTTTPSPEDGFEVQPLHPDKAQIPIVGSNGSSRLQDSRI</sequence>
<keyword id="KW-0877">Alternative promoter usage</keyword>
<keyword id="KW-0029">Amino-acid transport</keyword>
<keyword id="KW-1003">Cell membrane</keyword>
<keyword id="KW-0325">Glycoprotein</keyword>
<keyword id="KW-0472">Membrane</keyword>
<keyword id="KW-0532">Neurotransmitter transport</keyword>
<keyword id="KW-0597">Phosphoprotein</keyword>
<keyword id="KW-1185">Reference proteome</keyword>
<keyword id="KW-0769">Symport</keyword>
<keyword id="KW-0812">Transmembrane</keyword>
<keyword id="KW-1133">Transmembrane helix</keyword>
<keyword id="KW-0813">Transport</keyword>
<proteinExistence type="evidence at protein level"/>